<protein>
    <recommendedName>
        <fullName evidence="1">Protein GrpE</fullName>
    </recommendedName>
    <alternativeName>
        <fullName evidence="1">HSP-70 cofactor</fullName>
    </alternativeName>
</protein>
<feature type="chain" id="PRO_0000113891" description="Protein GrpE">
    <location>
        <begin position="1"/>
        <end position="200"/>
    </location>
</feature>
<feature type="region of interest" description="Disordered" evidence="2">
    <location>
        <begin position="1"/>
        <end position="30"/>
    </location>
</feature>
<feature type="compositionally biased region" description="Basic and acidic residues" evidence="2">
    <location>
        <begin position="1"/>
        <end position="12"/>
    </location>
</feature>
<feature type="sequence conflict" description="In Ref. 3; CAA74626." evidence="3" ref="3">
    <original>H</original>
    <variation>Y</variation>
    <location>
        <position position="160"/>
    </location>
</feature>
<sequence length="200" mass="22659">MSNEEIKNKDEQLQQDAVETEAEVVGTDADIDWNQAADEIDEKEAKIAQLEAALLVSEERVKEQQDSVLRARAEVENMRRRSEQEVDKARKFALSRFAEELLPVIDNLERAIQAADGEVEAIKPLLEGVELTHKTFVDTIAKFGLKEINPHGEVFNPEFHQAMSIQESAEHEPNTVMFVMQKGYELNGRVLRPAMVMVSK</sequence>
<comment type="function">
    <text evidence="1">Participates actively in the response to hyperosmotic and heat shock by preventing the aggregation of stress-denatured proteins, in association with DnaK and GrpE. It is the nucleotide exchange factor for DnaK and may function as a thermosensor. Unfolded proteins bind initially to DnaJ; upon interaction with the DnaJ-bound protein, DnaK hydrolyzes its bound ATP, resulting in the formation of a stable complex. GrpE releases ADP from DnaK; ATP binding to DnaK triggers the release of the substrate protein, thus completing the reaction cycle. Several rounds of ATP-dependent interactions between DnaJ, DnaK and GrpE are required for fully efficient folding.</text>
</comment>
<comment type="subunit">
    <text evidence="1">Homodimer.</text>
</comment>
<comment type="subcellular location">
    <subcellularLocation>
        <location evidence="1">Cytoplasm</location>
    </subcellularLocation>
</comment>
<comment type="similarity">
    <text evidence="1">Belongs to the GrpE family.</text>
</comment>
<proteinExistence type="inferred from homology"/>
<accession>O30862</accession>
<accession>O34240</accession>
<accession>Q9KTP7</accession>
<reference key="1">
    <citation type="journal article" date="2000" name="Nature">
        <title>DNA sequence of both chromosomes of the cholera pathogen Vibrio cholerae.</title>
        <authorList>
            <person name="Heidelberg J.F."/>
            <person name="Eisen J.A."/>
            <person name="Nelson W.C."/>
            <person name="Clayton R.A."/>
            <person name="Gwinn M.L."/>
            <person name="Dodson R.J."/>
            <person name="Haft D.H."/>
            <person name="Hickey E.K."/>
            <person name="Peterson J.D."/>
            <person name="Umayam L.A."/>
            <person name="Gill S.R."/>
            <person name="Nelson K.E."/>
            <person name="Read T.D."/>
            <person name="Tettelin H."/>
            <person name="Richardson D.L."/>
            <person name="Ermolaeva M.D."/>
            <person name="Vamathevan J.J."/>
            <person name="Bass S."/>
            <person name="Qin H."/>
            <person name="Dragoi I."/>
            <person name="Sellers P."/>
            <person name="McDonald L.A."/>
            <person name="Utterback T.R."/>
            <person name="Fleischmann R.D."/>
            <person name="Nierman W.C."/>
            <person name="White O."/>
            <person name="Salzberg S.L."/>
            <person name="Smith H.O."/>
            <person name="Colwell R.R."/>
            <person name="Mekalanos J.J."/>
            <person name="Venter J.C."/>
            <person name="Fraser C.M."/>
        </authorList>
    </citation>
    <scope>NUCLEOTIDE SEQUENCE [LARGE SCALE GENOMIC DNA]</scope>
    <source>
        <strain>ATCC 39315 / El Tor Inaba N16961</strain>
    </source>
</reference>
<reference key="2">
    <citation type="submission" date="1997-08" db="EMBL/GenBank/DDBJ databases">
        <authorList>
            <person name="Ghosh A."/>
        </authorList>
    </citation>
    <scope>NUCLEOTIDE SEQUENCE [GENOMIC DNA] OF 122-200</scope>
    <source>
        <strain>ATCC 51352 / El Tor MAK757 / Serotype O1</strain>
    </source>
</reference>
<reference key="3">
    <citation type="journal article" date="1999" name="Infect. Immun.">
        <title>Role of DnaK in in vitro and in vivo expression of virulence factors of Vibrio cholerae.</title>
        <authorList>
            <person name="Chakrabarti S."/>
            <person name="Sengupta N."/>
            <person name="Chowdhury R."/>
        </authorList>
    </citation>
    <scope>NUCLEOTIDE SEQUENCE [GENOMIC DNA] OF 158-199</scope>
    <source>
        <strain>ATCC 25870 / Classical Inaba 569B / Serotype O1</strain>
    </source>
</reference>
<gene>
    <name evidence="1" type="primary">grpE</name>
    <name type="ordered locus">VC_0854</name>
</gene>
<keyword id="KW-0143">Chaperone</keyword>
<keyword id="KW-0963">Cytoplasm</keyword>
<keyword id="KW-1185">Reference proteome</keyword>
<keyword id="KW-0346">Stress response</keyword>
<dbReference type="EMBL" id="AE003852">
    <property type="protein sequence ID" value="AAF94016.1"/>
    <property type="molecule type" value="Genomic_DNA"/>
</dbReference>
<dbReference type="EMBL" id="AF019558">
    <property type="protein sequence ID" value="AAB86382.1"/>
    <property type="molecule type" value="Genomic_DNA"/>
</dbReference>
<dbReference type="EMBL" id="Y14237">
    <property type="protein sequence ID" value="CAA74626.1"/>
    <property type="molecule type" value="Genomic_DNA"/>
</dbReference>
<dbReference type="PIR" id="A82273">
    <property type="entry name" value="A82273"/>
</dbReference>
<dbReference type="RefSeq" id="NP_230501.1">
    <property type="nucleotide sequence ID" value="NC_002505.1"/>
</dbReference>
<dbReference type="RefSeq" id="WP_000064038.1">
    <property type="nucleotide sequence ID" value="NZ_LT906614.1"/>
</dbReference>
<dbReference type="SMR" id="O30862"/>
<dbReference type="STRING" id="243277.VC_0854"/>
<dbReference type="DNASU" id="2614521"/>
<dbReference type="EnsemblBacteria" id="AAF94016">
    <property type="protein sequence ID" value="AAF94016"/>
    <property type="gene ID" value="VC_0854"/>
</dbReference>
<dbReference type="GeneID" id="69720431"/>
<dbReference type="KEGG" id="vch:VC_0854"/>
<dbReference type="PATRIC" id="fig|243277.26.peg.814"/>
<dbReference type="eggNOG" id="COG0576">
    <property type="taxonomic scope" value="Bacteria"/>
</dbReference>
<dbReference type="HOGENOM" id="CLU_057217_6_0_6"/>
<dbReference type="Proteomes" id="UP000000584">
    <property type="component" value="Chromosome 1"/>
</dbReference>
<dbReference type="GO" id="GO:0005829">
    <property type="term" value="C:cytosol"/>
    <property type="evidence" value="ECO:0000318"/>
    <property type="project" value="GO_Central"/>
</dbReference>
<dbReference type="GO" id="GO:0000774">
    <property type="term" value="F:adenyl-nucleotide exchange factor activity"/>
    <property type="evidence" value="ECO:0000318"/>
    <property type="project" value="GO_Central"/>
</dbReference>
<dbReference type="GO" id="GO:0042803">
    <property type="term" value="F:protein homodimerization activity"/>
    <property type="evidence" value="ECO:0007669"/>
    <property type="project" value="InterPro"/>
</dbReference>
<dbReference type="GO" id="GO:0051087">
    <property type="term" value="F:protein-folding chaperone binding"/>
    <property type="evidence" value="ECO:0007669"/>
    <property type="project" value="InterPro"/>
</dbReference>
<dbReference type="GO" id="GO:0051082">
    <property type="term" value="F:unfolded protein binding"/>
    <property type="evidence" value="ECO:0000318"/>
    <property type="project" value="GO_Central"/>
</dbReference>
<dbReference type="GO" id="GO:0006457">
    <property type="term" value="P:protein folding"/>
    <property type="evidence" value="ECO:0007669"/>
    <property type="project" value="InterPro"/>
</dbReference>
<dbReference type="CDD" id="cd00446">
    <property type="entry name" value="GrpE"/>
    <property type="match status" value="1"/>
</dbReference>
<dbReference type="FunFam" id="2.30.22.10:FF:000001">
    <property type="entry name" value="Protein GrpE"/>
    <property type="match status" value="1"/>
</dbReference>
<dbReference type="FunFam" id="3.90.20.20:FF:000014">
    <property type="entry name" value="Protein GrpE"/>
    <property type="match status" value="1"/>
</dbReference>
<dbReference type="Gene3D" id="3.90.20.20">
    <property type="match status" value="1"/>
</dbReference>
<dbReference type="Gene3D" id="2.30.22.10">
    <property type="entry name" value="Head domain of nucleotide exchange factor GrpE"/>
    <property type="match status" value="1"/>
</dbReference>
<dbReference type="HAMAP" id="MF_01151">
    <property type="entry name" value="GrpE"/>
    <property type="match status" value="1"/>
</dbReference>
<dbReference type="InterPro" id="IPR000740">
    <property type="entry name" value="GrpE"/>
</dbReference>
<dbReference type="InterPro" id="IPR013805">
    <property type="entry name" value="GrpE_coiled_coil"/>
</dbReference>
<dbReference type="InterPro" id="IPR009012">
    <property type="entry name" value="GrpE_head"/>
</dbReference>
<dbReference type="NCBIfam" id="NF010737">
    <property type="entry name" value="PRK14139.1"/>
    <property type="match status" value="1"/>
</dbReference>
<dbReference type="NCBIfam" id="NF010738">
    <property type="entry name" value="PRK14140.1"/>
    <property type="match status" value="1"/>
</dbReference>
<dbReference type="NCBIfam" id="NF010748">
    <property type="entry name" value="PRK14150.1"/>
    <property type="match status" value="1"/>
</dbReference>
<dbReference type="PANTHER" id="PTHR21237">
    <property type="entry name" value="GRPE PROTEIN"/>
    <property type="match status" value="1"/>
</dbReference>
<dbReference type="PANTHER" id="PTHR21237:SF23">
    <property type="entry name" value="GRPE PROTEIN HOMOLOG, MITOCHONDRIAL"/>
    <property type="match status" value="1"/>
</dbReference>
<dbReference type="Pfam" id="PF01025">
    <property type="entry name" value="GrpE"/>
    <property type="match status" value="1"/>
</dbReference>
<dbReference type="PRINTS" id="PR00773">
    <property type="entry name" value="GRPEPROTEIN"/>
</dbReference>
<dbReference type="SUPFAM" id="SSF58014">
    <property type="entry name" value="Coiled-coil domain of nucleotide exchange factor GrpE"/>
    <property type="match status" value="1"/>
</dbReference>
<dbReference type="SUPFAM" id="SSF51064">
    <property type="entry name" value="Head domain of nucleotide exchange factor GrpE"/>
    <property type="match status" value="1"/>
</dbReference>
<dbReference type="PROSITE" id="PS01071">
    <property type="entry name" value="GRPE"/>
    <property type="match status" value="1"/>
</dbReference>
<evidence type="ECO:0000255" key="1">
    <source>
        <dbReference type="HAMAP-Rule" id="MF_01151"/>
    </source>
</evidence>
<evidence type="ECO:0000256" key="2">
    <source>
        <dbReference type="SAM" id="MobiDB-lite"/>
    </source>
</evidence>
<evidence type="ECO:0000305" key="3"/>
<organism>
    <name type="scientific">Vibrio cholerae serotype O1 (strain ATCC 39315 / El Tor Inaba N16961)</name>
    <dbReference type="NCBI Taxonomy" id="243277"/>
    <lineage>
        <taxon>Bacteria</taxon>
        <taxon>Pseudomonadati</taxon>
        <taxon>Pseudomonadota</taxon>
        <taxon>Gammaproteobacteria</taxon>
        <taxon>Vibrionales</taxon>
        <taxon>Vibrionaceae</taxon>
        <taxon>Vibrio</taxon>
    </lineage>
</organism>
<name>GRPE_VIBCH</name>